<gene>
    <name type="primary">psm1</name>
    <name type="synonym">smc1</name>
    <name type="ORF">SPBC29A10.04</name>
</gene>
<keyword id="KW-0002">3D-structure</keyword>
<keyword id="KW-0067">ATP-binding</keyword>
<keyword id="KW-0131">Cell cycle</keyword>
<keyword id="KW-0132">Cell division</keyword>
<keyword id="KW-0158">Chromosome</keyword>
<keyword id="KW-0175">Coiled coil</keyword>
<keyword id="KW-0498">Mitosis</keyword>
<keyword id="KW-0547">Nucleotide-binding</keyword>
<keyword id="KW-0539">Nucleus</keyword>
<keyword id="KW-1185">Reference proteome</keyword>
<sequence>MGRLLRLEVENFKSYRGHQIIGPFEDFTSIIGPNGAGKSNLMDAISFVLGVKSSHLRSTNVKELIYRGKILQRDNTDFTDSSNPTTAYVKLMYELDNGEQREYKRAITPSGATEYKIDEEIVTFSEYCGSLQKENILVRARNFLVFQGDVETIASQSPLELSKLVEQISGSLEYKSEYDKSKDEQDKAVNLSAHSFNKKRGINAELRQYQEQKTEAERYQSQKEKRDSAQLVYLLWKLFHLEKSISSNMAEVTRLKADSIQLIERRDENTKEIEKLKEKEGSIRRNLLAFDRKVRKQEKLIASKRPELISIAEKALESKSNLRKIQRKAAEIEKDYSDQASTLQVLENQLTSLSAAEKEFLKDMQEKEQLKGLRLLPEDKEEYEGLRSEADKLNSNLLFKLQTLNRNIKVTSQSKDSLTSIVGDLESKIKSLHESVSSLDTERADLLAKINEKIESLELEKHDQQKKRLTYSELFHKTQELNEELQSCLQKILEASADRNESKQDAKKREALYALKRIYPEVKGRIIDLCTPTQKKYESAIAAALGKNFDAIVVETQAVAKECIDYIKEQRIGIMTFFPMDTIAASPVNQKFRGTHKGARLAIDVLNFESEYERVMISAVGNTLICDSMTVARDLSYNKRLNAKTVTLEGTVIHKTGLITGGSSNNRSAKHWDDHDFDLLTQTKDRLMHQIGEIEYQKSSCVITESDTVKLHSLESEISLLKDKYTVVSRSVEDKKKEIGHYESLIKEKQPHLSELEMELRNFVKSRDELQIQVEKVEEKIFSGFCKRIGISDIHTYDEIHRTFTQSFTQKQLEFTKQKSLLENRISFEKQRVSDTRLRLERMHKFIEKDQESIDNYEQNREALESEVATAEAELELLKEDFASENSKTEKILLAASEKKLVGKRLVSELTKLSGNITLLESEIDRYVSEWHAILRKCKLEDIDVPLREGSLTSIPIDDVSNSGDITMGEEPSEPVINFEKFGVEVDYDELDEELRNDGSESMASVLQEKLREYSEELDQMSPNLRAIERLETVETRLAKLDEEFAAARKAAKNAKERFNAVKQKRLQKFQAAFSHISEQIDPIYKELTKSPAFPLGGTAYLTLDDLDEPYLGGIKFHAMPPMKRFRDMDQLSGGEKTMAALALLFAIHSYQPSPFFVLDEIDAALDQTNVTKIANYIRQHASSGFQFVVISLKNQLFSKSEALVGIYRDQQENSSRTLSINLEGYVE</sequence>
<protein>
    <recommendedName>
        <fullName>Structural maintenance of chromosomes protein 1</fullName>
    </recommendedName>
    <alternativeName>
        <fullName>Chromosome segregation protein smc1</fullName>
    </alternativeName>
    <alternativeName>
        <fullName>Cohesin complex subunit psm1</fullName>
    </alternativeName>
</protein>
<name>SMC1_SCHPO</name>
<comment type="function">
    <text>Involved in chromosome cohesion during cell cycle and in DNA repair. Central component of cohesin complex. The cohesin complex is required for the cohesion of sister chromatids after DNA replication. The cohesin complex apparently forms a large proteinaceous ring within which sister chromatids can be trapped. At anaphase, the complex is cleaved and dissociates from chromatin, allowing sister chromatids to segregate.</text>
</comment>
<comment type="subunit">
    <text>Cohesin complexes are composed of the psm1/smc1 and psm3/smc3 heterodimer attached via their SMC hinge domain, rad21/scc1 which link them, and psc3/scc3, which interacts with rad21.</text>
</comment>
<comment type="interaction">
    <interactant intactId="EBI-1151900">
        <id>O94383</id>
    </interactant>
    <interactant intactId="EBI-1151879">
        <id>O42649</id>
        <label>psm3</label>
    </interactant>
    <organismsDiffer>false</organismsDiffer>
    <experiments>3</experiments>
</comment>
<comment type="subcellular location">
    <subcellularLocation>
        <location evidence="3">Nucleus</location>
    </subcellularLocation>
    <subcellularLocation>
        <location evidence="3">Chromosome</location>
    </subcellularLocation>
    <text>Associates with chromatin. Before prophase it is scattered along chromosome arms. At anaphase, the rad21 subunit of the cohesin complex is cleaved, leading to the dissociation of the complex from chromosomes, allowing chromosome separation.</text>
</comment>
<comment type="domain">
    <text evidence="1">The flexible SMC hinge domain, which separates the large intramolecular coiled coil regions, allows the heterotypic interaction with the corresponding domain of psm3, forming a V-shaped heterodimer. The two heads of the heterodimer are then connected by different ends of the cleavable rad21 protein, forming a ring structure (By similarity).</text>
</comment>
<comment type="similarity">
    <text evidence="4">Belongs to the SMC family. SMC1 subfamily.</text>
</comment>
<reference evidence="4" key="1">
    <citation type="journal article" date="2000" name="Genes Dev.">
        <title>Characterization of fission yeast cohesin: essential anaphase proteolysis of Rad21 phosphorylated in the S phase.</title>
        <authorList>
            <person name="Tomonaga T."/>
            <person name="Nagao K."/>
            <person name="Kawasaki Y."/>
            <person name="Furuya K."/>
            <person name="Murakami A."/>
            <person name="Morishita J."/>
            <person name="Yuasa T."/>
            <person name="Sutani T."/>
            <person name="Kearsey S.E."/>
            <person name="Uhlmann F."/>
            <person name="Nasmyth K."/>
            <person name="Yanagida M."/>
        </authorList>
    </citation>
    <scope>NUCLEOTIDE SEQUENCE [GENOMIC DNA]</scope>
    <scope>CHARACTERIZATION</scope>
    <scope>SUBCELLULAR LOCATION</scope>
</reference>
<reference evidence="4" key="2">
    <citation type="journal article" date="2002" name="Nature">
        <title>The genome sequence of Schizosaccharomyces pombe.</title>
        <authorList>
            <person name="Wood V."/>
            <person name="Gwilliam R."/>
            <person name="Rajandream M.A."/>
            <person name="Lyne M.H."/>
            <person name="Lyne R."/>
            <person name="Stewart A."/>
            <person name="Sgouros J.G."/>
            <person name="Peat N."/>
            <person name="Hayles J."/>
            <person name="Baker S.G."/>
            <person name="Basham D."/>
            <person name="Bowman S."/>
            <person name="Brooks K."/>
            <person name="Brown D."/>
            <person name="Brown S."/>
            <person name="Chillingworth T."/>
            <person name="Churcher C.M."/>
            <person name="Collins M."/>
            <person name="Connor R."/>
            <person name="Cronin A."/>
            <person name="Davis P."/>
            <person name="Feltwell T."/>
            <person name="Fraser A."/>
            <person name="Gentles S."/>
            <person name="Goble A."/>
            <person name="Hamlin N."/>
            <person name="Harris D.E."/>
            <person name="Hidalgo J."/>
            <person name="Hodgson G."/>
            <person name="Holroyd S."/>
            <person name="Hornsby T."/>
            <person name="Howarth S."/>
            <person name="Huckle E.J."/>
            <person name="Hunt S."/>
            <person name="Jagels K."/>
            <person name="James K.D."/>
            <person name="Jones L."/>
            <person name="Jones M."/>
            <person name="Leather S."/>
            <person name="McDonald S."/>
            <person name="McLean J."/>
            <person name="Mooney P."/>
            <person name="Moule S."/>
            <person name="Mungall K.L."/>
            <person name="Murphy L.D."/>
            <person name="Niblett D."/>
            <person name="Odell C."/>
            <person name="Oliver K."/>
            <person name="O'Neil S."/>
            <person name="Pearson D."/>
            <person name="Quail M.A."/>
            <person name="Rabbinowitsch E."/>
            <person name="Rutherford K.M."/>
            <person name="Rutter S."/>
            <person name="Saunders D."/>
            <person name="Seeger K."/>
            <person name="Sharp S."/>
            <person name="Skelton J."/>
            <person name="Simmonds M.N."/>
            <person name="Squares R."/>
            <person name="Squares S."/>
            <person name="Stevens K."/>
            <person name="Taylor K."/>
            <person name="Taylor R.G."/>
            <person name="Tivey A."/>
            <person name="Walsh S.V."/>
            <person name="Warren T."/>
            <person name="Whitehead S."/>
            <person name="Woodward J.R."/>
            <person name="Volckaert G."/>
            <person name="Aert R."/>
            <person name="Robben J."/>
            <person name="Grymonprez B."/>
            <person name="Weltjens I."/>
            <person name="Vanstreels E."/>
            <person name="Rieger M."/>
            <person name="Schaefer M."/>
            <person name="Mueller-Auer S."/>
            <person name="Gabel C."/>
            <person name="Fuchs M."/>
            <person name="Duesterhoeft A."/>
            <person name="Fritzc C."/>
            <person name="Holzer E."/>
            <person name="Moestl D."/>
            <person name="Hilbert H."/>
            <person name="Borzym K."/>
            <person name="Langer I."/>
            <person name="Beck A."/>
            <person name="Lehrach H."/>
            <person name="Reinhardt R."/>
            <person name="Pohl T.M."/>
            <person name="Eger P."/>
            <person name="Zimmermann W."/>
            <person name="Wedler H."/>
            <person name="Wambutt R."/>
            <person name="Purnelle B."/>
            <person name="Goffeau A."/>
            <person name="Cadieu E."/>
            <person name="Dreano S."/>
            <person name="Gloux S."/>
            <person name="Lelaure V."/>
            <person name="Mottier S."/>
            <person name="Galibert F."/>
            <person name="Aves S.J."/>
            <person name="Xiang Z."/>
            <person name="Hunt C."/>
            <person name="Moore K."/>
            <person name="Hurst S.M."/>
            <person name="Lucas M."/>
            <person name="Rochet M."/>
            <person name="Gaillardin C."/>
            <person name="Tallada V.A."/>
            <person name="Garzon A."/>
            <person name="Thode G."/>
            <person name="Daga R.R."/>
            <person name="Cruzado L."/>
            <person name="Jimenez J."/>
            <person name="Sanchez M."/>
            <person name="del Rey F."/>
            <person name="Benito J."/>
            <person name="Dominguez A."/>
            <person name="Revuelta J.L."/>
            <person name="Moreno S."/>
            <person name="Armstrong J."/>
            <person name="Forsburg S.L."/>
            <person name="Cerutti L."/>
            <person name="Lowe T."/>
            <person name="McCombie W.R."/>
            <person name="Paulsen I."/>
            <person name="Potashkin J."/>
            <person name="Shpakovski G.V."/>
            <person name="Ussery D."/>
            <person name="Barrell B.G."/>
            <person name="Nurse P."/>
        </authorList>
    </citation>
    <scope>NUCLEOTIDE SEQUENCE [LARGE SCALE GENOMIC DNA]</scope>
    <source>
        <strain>972 / ATCC 24843</strain>
    </source>
</reference>
<reference key="3">
    <citation type="journal article" date="2011" name="Science">
        <title>Comparative functional genomics of the fission yeasts.</title>
        <authorList>
            <person name="Rhind N."/>
            <person name="Chen Z."/>
            <person name="Yassour M."/>
            <person name="Thompson D.A."/>
            <person name="Haas B.J."/>
            <person name="Habib N."/>
            <person name="Wapinski I."/>
            <person name="Roy S."/>
            <person name="Lin M.F."/>
            <person name="Heiman D.I."/>
            <person name="Young S.K."/>
            <person name="Furuya K."/>
            <person name="Guo Y."/>
            <person name="Pidoux A."/>
            <person name="Chen H.M."/>
            <person name="Robbertse B."/>
            <person name="Goldberg J.M."/>
            <person name="Aoki K."/>
            <person name="Bayne E.H."/>
            <person name="Berlin A.M."/>
            <person name="Desjardins C.A."/>
            <person name="Dobbs E."/>
            <person name="Dukaj L."/>
            <person name="Fan L."/>
            <person name="FitzGerald M.G."/>
            <person name="French C."/>
            <person name="Gujja S."/>
            <person name="Hansen K."/>
            <person name="Keifenheim D."/>
            <person name="Levin J.Z."/>
            <person name="Mosher R.A."/>
            <person name="Mueller C.A."/>
            <person name="Pfiffner J."/>
            <person name="Priest M."/>
            <person name="Russ C."/>
            <person name="Smialowska A."/>
            <person name="Swoboda P."/>
            <person name="Sykes S.M."/>
            <person name="Vaughn M."/>
            <person name="Vengrova S."/>
            <person name="Yoder R."/>
            <person name="Zeng Q."/>
            <person name="Allshire R."/>
            <person name="Baulcombe D."/>
            <person name="Birren B.W."/>
            <person name="Brown W."/>
            <person name="Ekwall K."/>
            <person name="Kellis M."/>
            <person name="Leatherwood J."/>
            <person name="Levin H."/>
            <person name="Margalit H."/>
            <person name="Martienssen R."/>
            <person name="Nieduszynski C.A."/>
            <person name="Spatafora J.W."/>
            <person name="Friedman N."/>
            <person name="Dalgaard J.Z."/>
            <person name="Baumann P."/>
            <person name="Niki H."/>
            <person name="Regev A."/>
            <person name="Nusbaum C."/>
        </authorList>
    </citation>
    <scope>REVISION OF GENE MODEL</scope>
</reference>
<proteinExistence type="evidence at protein level"/>
<feature type="chain" id="PRO_0000119010" description="Structural maintenance of chromosomes protein 1">
    <location>
        <begin position="1"/>
        <end position="1228"/>
    </location>
</feature>
<feature type="domain" description="SMC hinge">
    <location>
        <begin position="522"/>
        <end position="635"/>
    </location>
</feature>
<feature type="coiled-coil region" evidence="2">
    <location>
        <begin position="197"/>
        <end position="510"/>
    </location>
</feature>
<feature type="coiled-coil region" evidence="2">
    <location>
        <begin position="710"/>
        <end position="783"/>
    </location>
</feature>
<feature type="coiled-coil region" evidence="2">
    <location>
        <begin position="814"/>
        <end position="926"/>
    </location>
</feature>
<feature type="coiled-coil region" evidence="2">
    <location>
        <begin position="984"/>
        <end position="1068"/>
    </location>
</feature>
<feature type="binding site" evidence="4">
    <location>
        <begin position="32"/>
        <end position="39"/>
    </location>
    <ligand>
        <name>ATP</name>
        <dbReference type="ChEBI" id="CHEBI:30616"/>
    </ligand>
</feature>
<organism>
    <name type="scientific">Schizosaccharomyces pombe (strain 972 / ATCC 24843)</name>
    <name type="common">Fission yeast</name>
    <dbReference type="NCBI Taxonomy" id="284812"/>
    <lineage>
        <taxon>Eukaryota</taxon>
        <taxon>Fungi</taxon>
        <taxon>Dikarya</taxon>
        <taxon>Ascomycota</taxon>
        <taxon>Taphrinomycotina</taxon>
        <taxon>Schizosaccharomycetes</taxon>
        <taxon>Schizosaccharomycetales</taxon>
        <taxon>Schizosaccharomycetaceae</taxon>
        <taxon>Schizosaccharomyces</taxon>
    </lineage>
</organism>
<evidence type="ECO:0000250" key="1"/>
<evidence type="ECO:0000255" key="2"/>
<evidence type="ECO:0000269" key="3">
    <source>
    </source>
</evidence>
<evidence type="ECO:0000305" key="4"/>
<dbReference type="EMBL" id="CU329671">
    <property type="protein sequence ID" value="CAA22432.2"/>
    <property type="molecule type" value="Genomic_DNA"/>
</dbReference>
<dbReference type="PIR" id="T40059">
    <property type="entry name" value="T40059"/>
</dbReference>
<dbReference type="RefSeq" id="NP_596049.2">
    <property type="nucleotide sequence ID" value="NM_001021960.2"/>
</dbReference>
<dbReference type="PDB" id="6YUF">
    <property type="method" value="EM"/>
    <property type="resolution" value="3.94 A"/>
    <property type="chains" value="A=1-1228"/>
</dbReference>
<dbReference type="PDBsum" id="6YUF"/>
<dbReference type="EMDB" id="EMD-10930"/>
<dbReference type="SMR" id="O94383"/>
<dbReference type="BioGRID" id="277084">
    <property type="interactions" value="30"/>
</dbReference>
<dbReference type="FunCoup" id="O94383">
    <property type="interactions" value="661"/>
</dbReference>
<dbReference type="IntAct" id="O94383">
    <property type="interactions" value="2"/>
</dbReference>
<dbReference type="STRING" id="284812.O94383"/>
<dbReference type="iPTMnet" id="O94383"/>
<dbReference type="PaxDb" id="4896-SPBC29A10.04.1"/>
<dbReference type="EnsemblFungi" id="SPBC29A10.04.1">
    <property type="protein sequence ID" value="SPBC29A10.04.1:pep"/>
    <property type="gene ID" value="SPBC29A10.04"/>
</dbReference>
<dbReference type="GeneID" id="2540557"/>
<dbReference type="KEGG" id="spo:2540557"/>
<dbReference type="PomBase" id="SPBC29A10.04">
    <property type="gene designation" value="psm1"/>
</dbReference>
<dbReference type="VEuPathDB" id="FungiDB:SPBC29A10.04"/>
<dbReference type="eggNOG" id="KOG0018">
    <property type="taxonomic scope" value="Eukaryota"/>
</dbReference>
<dbReference type="HOGENOM" id="CLU_001042_0_1_1"/>
<dbReference type="InParanoid" id="O94383"/>
<dbReference type="OMA" id="KHMDFQR"/>
<dbReference type="Reactome" id="R-SPO-2470946">
    <property type="pathway name" value="Cohesin Loading onto Chromatin"/>
</dbReference>
<dbReference type="Reactome" id="R-SPO-2500257">
    <property type="pathway name" value="Resolution of Sister Chromatid Cohesion"/>
</dbReference>
<dbReference type="Reactome" id="R-SPO-3108214">
    <property type="pathway name" value="SUMOylation of DNA damage response and repair proteins"/>
</dbReference>
<dbReference type="PRO" id="PR:O94383"/>
<dbReference type="Proteomes" id="UP000002485">
    <property type="component" value="Chromosome II"/>
</dbReference>
<dbReference type="GO" id="GO:0005694">
    <property type="term" value="C:chromosome"/>
    <property type="evidence" value="ECO:0000314"/>
    <property type="project" value="UniProtKB"/>
</dbReference>
<dbReference type="GO" id="GO:0008278">
    <property type="term" value="C:cohesin complex"/>
    <property type="evidence" value="ECO:0000314"/>
    <property type="project" value="UniProtKB"/>
</dbReference>
<dbReference type="GO" id="GO:0000779">
    <property type="term" value="C:condensed chromosome, centromeric region"/>
    <property type="evidence" value="ECO:0000314"/>
    <property type="project" value="PomBase"/>
</dbReference>
<dbReference type="GO" id="GO:0030893">
    <property type="term" value="C:meiotic cohesin complex"/>
    <property type="evidence" value="ECO:0000303"/>
    <property type="project" value="PomBase"/>
</dbReference>
<dbReference type="GO" id="GO:0030892">
    <property type="term" value="C:mitotic cohesin complex"/>
    <property type="evidence" value="ECO:0000314"/>
    <property type="project" value="PomBase"/>
</dbReference>
<dbReference type="GO" id="GO:0005634">
    <property type="term" value="C:nucleus"/>
    <property type="evidence" value="ECO:0000269"/>
    <property type="project" value="PomBase"/>
</dbReference>
<dbReference type="GO" id="GO:0005524">
    <property type="term" value="F:ATP binding"/>
    <property type="evidence" value="ECO:0007669"/>
    <property type="project" value="UniProtKB-KW"/>
</dbReference>
<dbReference type="GO" id="GO:0016887">
    <property type="term" value="F:ATP hydrolysis activity"/>
    <property type="evidence" value="ECO:0007669"/>
    <property type="project" value="InterPro"/>
</dbReference>
<dbReference type="GO" id="GO:0003677">
    <property type="term" value="F:DNA binding"/>
    <property type="evidence" value="ECO:0000318"/>
    <property type="project" value="GO_Central"/>
</dbReference>
<dbReference type="GO" id="GO:0051301">
    <property type="term" value="P:cell division"/>
    <property type="evidence" value="ECO:0007669"/>
    <property type="project" value="UniProtKB-KW"/>
</dbReference>
<dbReference type="GO" id="GO:0140588">
    <property type="term" value="P:chromatin looping"/>
    <property type="evidence" value="ECO:0000314"/>
    <property type="project" value="PomBase"/>
</dbReference>
<dbReference type="GO" id="GO:0007064">
    <property type="term" value="P:mitotic sister chromatid cohesion"/>
    <property type="evidence" value="ECO:0000314"/>
    <property type="project" value="PomBase"/>
</dbReference>
<dbReference type="GO" id="GO:0007062">
    <property type="term" value="P:sister chromatid cohesion"/>
    <property type="evidence" value="ECO:0000318"/>
    <property type="project" value="GO_Central"/>
</dbReference>
<dbReference type="CDD" id="cd03275">
    <property type="entry name" value="ABC_SMC1_euk"/>
    <property type="match status" value="2"/>
</dbReference>
<dbReference type="FunFam" id="3.40.50.300:FF:000564">
    <property type="entry name" value="Structural maintenance of chromosomes 1A"/>
    <property type="match status" value="1"/>
</dbReference>
<dbReference type="Gene3D" id="1.20.1060.20">
    <property type="match status" value="1"/>
</dbReference>
<dbReference type="Gene3D" id="3.30.70.1620">
    <property type="match status" value="1"/>
</dbReference>
<dbReference type="Gene3D" id="3.40.50.300">
    <property type="entry name" value="P-loop containing nucleotide triphosphate hydrolases"/>
    <property type="match status" value="2"/>
</dbReference>
<dbReference type="InterPro" id="IPR027417">
    <property type="entry name" value="P-loop_NTPase"/>
</dbReference>
<dbReference type="InterPro" id="IPR003395">
    <property type="entry name" value="RecF/RecN/SMC_N"/>
</dbReference>
<dbReference type="InterPro" id="IPR024704">
    <property type="entry name" value="SMC"/>
</dbReference>
<dbReference type="InterPro" id="IPR028468">
    <property type="entry name" value="Smc1_ABC"/>
</dbReference>
<dbReference type="InterPro" id="IPR010935">
    <property type="entry name" value="SMC_hinge"/>
</dbReference>
<dbReference type="InterPro" id="IPR036277">
    <property type="entry name" value="SMC_hinge_sf"/>
</dbReference>
<dbReference type="PANTHER" id="PTHR18937:SF12">
    <property type="entry name" value="STRUCTURAL MAINTENANCE OF CHROMOSOMES PROTEIN"/>
    <property type="match status" value="1"/>
</dbReference>
<dbReference type="PANTHER" id="PTHR18937">
    <property type="entry name" value="STRUCTURAL MAINTENANCE OF CHROMOSOMES SMC FAMILY MEMBER"/>
    <property type="match status" value="1"/>
</dbReference>
<dbReference type="Pfam" id="PF06470">
    <property type="entry name" value="SMC_hinge"/>
    <property type="match status" value="1"/>
</dbReference>
<dbReference type="Pfam" id="PF02463">
    <property type="entry name" value="SMC_N"/>
    <property type="match status" value="1"/>
</dbReference>
<dbReference type="PIRSF" id="PIRSF005719">
    <property type="entry name" value="SMC"/>
    <property type="match status" value="1"/>
</dbReference>
<dbReference type="SMART" id="SM00968">
    <property type="entry name" value="SMC_hinge"/>
    <property type="match status" value="1"/>
</dbReference>
<dbReference type="SUPFAM" id="SSF52540">
    <property type="entry name" value="P-loop containing nucleoside triphosphate hydrolases"/>
    <property type="match status" value="1"/>
</dbReference>
<dbReference type="SUPFAM" id="SSF75553">
    <property type="entry name" value="Smc hinge domain"/>
    <property type="match status" value="1"/>
</dbReference>
<accession>O94383</accession>